<dbReference type="EMBL" id="AF155330">
    <property type="protein sequence ID" value="AAD40106.1"/>
    <property type="molecule type" value="mRNA"/>
</dbReference>
<dbReference type="EMBL" id="AK000830">
    <property type="protein sequence ID" value="BAA91392.1"/>
    <property type="molecule type" value="mRNA"/>
</dbReference>
<dbReference type="EMBL" id="BC002324">
    <property type="protein sequence ID" value="AAH02324.1"/>
    <property type="molecule type" value="mRNA"/>
</dbReference>
<dbReference type="CCDS" id="CCDS32521.1"/>
<dbReference type="RefSeq" id="NP_037469.2">
    <property type="nucleotide sequence ID" value="NM_013337.4"/>
</dbReference>
<dbReference type="PDB" id="7CGP">
    <property type="method" value="EM"/>
    <property type="resolution" value="3.70 A"/>
    <property type="chains" value="A=1-194"/>
</dbReference>
<dbReference type="PDBsum" id="7CGP"/>
<dbReference type="EMDB" id="EMD-9958"/>
<dbReference type="SMR" id="Q9Y584"/>
<dbReference type="BioGRID" id="118969">
    <property type="interactions" value="17"/>
</dbReference>
<dbReference type="ComplexPortal" id="CPX-6124">
    <property type="entry name" value="TIM22 mitochondrial inner membrane twin-pore carrier translocase complex"/>
</dbReference>
<dbReference type="CORUM" id="Q9Y584"/>
<dbReference type="FunCoup" id="Q9Y584">
    <property type="interactions" value="1561"/>
</dbReference>
<dbReference type="IntAct" id="Q9Y584">
    <property type="interactions" value="6"/>
</dbReference>
<dbReference type="STRING" id="9606.ENSP00000320236"/>
<dbReference type="iPTMnet" id="Q9Y584"/>
<dbReference type="PhosphoSitePlus" id="Q9Y584"/>
<dbReference type="SwissPalm" id="Q9Y584"/>
<dbReference type="BioMuta" id="TIMM22"/>
<dbReference type="DMDM" id="24638462"/>
<dbReference type="jPOST" id="Q9Y584"/>
<dbReference type="MassIVE" id="Q9Y584"/>
<dbReference type="PaxDb" id="9606-ENSP00000320236"/>
<dbReference type="PeptideAtlas" id="Q9Y584"/>
<dbReference type="ProteomicsDB" id="86313"/>
<dbReference type="Pumba" id="Q9Y584"/>
<dbReference type="Antibodypedia" id="22666">
    <property type="antibodies" value="28 antibodies from 17 providers"/>
</dbReference>
<dbReference type="DNASU" id="29928"/>
<dbReference type="Ensembl" id="ENST00000327158.5">
    <property type="protein sequence ID" value="ENSP00000320236.2"/>
    <property type="gene ID" value="ENSG00000177370.5"/>
</dbReference>
<dbReference type="Ensembl" id="ENST00000613269.2">
    <property type="protein sequence ID" value="ENSP00000482204.1"/>
    <property type="gene ID" value="ENSG00000278501.2"/>
</dbReference>
<dbReference type="Ensembl" id="ENST00000617832.2">
    <property type="protein sequence ID" value="ENSP00000478463.1"/>
    <property type="gene ID" value="ENSG00000277649.2"/>
</dbReference>
<dbReference type="GeneID" id="29928"/>
<dbReference type="KEGG" id="hsa:29928"/>
<dbReference type="MANE-Select" id="ENST00000327158.5">
    <property type="protein sequence ID" value="ENSP00000320236.2"/>
    <property type="RefSeq nucleotide sequence ID" value="NM_013337.4"/>
    <property type="RefSeq protein sequence ID" value="NP_037469.2"/>
</dbReference>
<dbReference type="UCSC" id="uc002fsc.4">
    <property type="organism name" value="human"/>
</dbReference>
<dbReference type="AGR" id="HGNC:17317"/>
<dbReference type="CTD" id="29928"/>
<dbReference type="DisGeNET" id="29928"/>
<dbReference type="GeneCards" id="TIMM22"/>
<dbReference type="HGNC" id="HGNC:17317">
    <property type="gene designation" value="TIMM22"/>
</dbReference>
<dbReference type="HPA" id="ENSG00000177370">
    <property type="expression patterns" value="Low tissue specificity"/>
</dbReference>
<dbReference type="MalaCards" id="TIMM22"/>
<dbReference type="MIM" id="607251">
    <property type="type" value="gene"/>
</dbReference>
<dbReference type="MIM" id="618851">
    <property type="type" value="phenotype"/>
</dbReference>
<dbReference type="neXtProt" id="NX_Q9Y584"/>
<dbReference type="OpenTargets" id="ENSG00000177370"/>
<dbReference type="PharmGKB" id="PA38230"/>
<dbReference type="VEuPathDB" id="HostDB:ENSG00000177370"/>
<dbReference type="eggNOG" id="KOG3225">
    <property type="taxonomic scope" value="Eukaryota"/>
</dbReference>
<dbReference type="GeneTree" id="ENSGT00390000016067"/>
<dbReference type="HOGENOM" id="CLU_091077_0_0_1"/>
<dbReference type="InParanoid" id="Q9Y584"/>
<dbReference type="OMA" id="VNPNMAD"/>
<dbReference type="OrthoDB" id="75343at2759"/>
<dbReference type="PAN-GO" id="Q9Y584">
    <property type="GO annotations" value="4 GO annotations based on evolutionary models"/>
</dbReference>
<dbReference type="PhylomeDB" id="Q9Y584"/>
<dbReference type="TreeFam" id="TF105836"/>
<dbReference type="PathwayCommons" id="Q9Y584"/>
<dbReference type="Reactome" id="R-HSA-1268020">
    <property type="pathway name" value="Mitochondrial protein import"/>
</dbReference>
<dbReference type="Reactome" id="R-HSA-9837999">
    <property type="pathway name" value="Mitochondrial protein degradation"/>
</dbReference>
<dbReference type="SignaLink" id="Q9Y584"/>
<dbReference type="SIGNOR" id="Q9Y584"/>
<dbReference type="BioGRID-ORCS" id="29928">
    <property type="hits" value="416 hits in 1167 CRISPR screens"/>
</dbReference>
<dbReference type="ChiTaRS" id="TIMM22">
    <property type="organism name" value="human"/>
</dbReference>
<dbReference type="GeneWiki" id="TIMM22"/>
<dbReference type="GenomeRNAi" id="29928"/>
<dbReference type="Pharos" id="Q9Y584">
    <property type="development level" value="Tbio"/>
</dbReference>
<dbReference type="PRO" id="PR:Q9Y584"/>
<dbReference type="Proteomes" id="UP000005640">
    <property type="component" value="Chromosome 17"/>
</dbReference>
<dbReference type="RNAct" id="Q9Y584">
    <property type="molecule type" value="protein"/>
</dbReference>
<dbReference type="Bgee" id="ENSG00000177370">
    <property type="expression patterns" value="Expressed in apex of heart and 101 other cell types or tissues"/>
</dbReference>
<dbReference type="GO" id="GO:0005743">
    <property type="term" value="C:mitochondrial inner membrane"/>
    <property type="evidence" value="ECO:0000314"/>
    <property type="project" value="ComplexPortal"/>
</dbReference>
<dbReference type="GO" id="GO:0005739">
    <property type="term" value="C:mitochondrion"/>
    <property type="evidence" value="ECO:0006056"/>
    <property type="project" value="FlyBase"/>
</dbReference>
<dbReference type="GO" id="GO:0042721">
    <property type="term" value="C:TIM22 mitochondrial import inner membrane insertion complex"/>
    <property type="evidence" value="ECO:0000314"/>
    <property type="project" value="UniProtKB"/>
</dbReference>
<dbReference type="GO" id="GO:0030943">
    <property type="term" value="F:mitochondrion targeting sequence binding"/>
    <property type="evidence" value="ECO:0000318"/>
    <property type="project" value="GO_Central"/>
</dbReference>
<dbReference type="GO" id="GO:0008320">
    <property type="term" value="F:protein transmembrane transporter activity"/>
    <property type="evidence" value="ECO:0000318"/>
    <property type="project" value="GO_Central"/>
</dbReference>
<dbReference type="GO" id="GO:0140318">
    <property type="term" value="F:protein transporter activity"/>
    <property type="evidence" value="ECO:0000315"/>
    <property type="project" value="FlyBase"/>
</dbReference>
<dbReference type="GO" id="GO:0045039">
    <property type="term" value="P:protein insertion into mitochondrial inner membrane"/>
    <property type="evidence" value="ECO:0000314"/>
    <property type="project" value="UniProtKB"/>
</dbReference>
<dbReference type="InterPro" id="IPR039175">
    <property type="entry name" value="TIM22"/>
</dbReference>
<dbReference type="PANTHER" id="PTHR14110">
    <property type="entry name" value="MITOCHONDRIAL IMPORT INNER MEMBRANE TRANSLOCASE SUBUNIT TIM22"/>
    <property type="match status" value="1"/>
</dbReference>
<dbReference type="PANTHER" id="PTHR14110:SF0">
    <property type="entry name" value="MITOCHONDRIAL IMPORT INNER MEMBRANE TRANSLOCASE SUBUNIT TIM22"/>
    <property type="match status" value="1"/>
</dbReference>
<dbReference type="Pfam" id="PF02466">
    <property type="entry name" value="Tim17"/>
    <property type="match status" value="1"/>
</dbReference>
<gene>
    <name type="primary">TIMM22</name>
    <name type="synonym">TEX4</name>
    <name type="synonym">TIM22</name>
</gene>
<evidence type="ECO:0000250" key="1">
    <source>
        <dbReference type="UniProtKB" id="Q12328"/>
    </source>
</evidence>
<evidence type="ECO:0000255" key="2"/>
<evidence type="ECO:0000269" key="3">
    <source>
    </source>
</evidence>
<evidence type="ECO:0000269" key="4">
    <source>
    </source>
</evidence>
<evidence type="ECO:0000269" key="5">
    <source>
    </source>
</evidence>
<evidence type="ECO:0000269" key="6">
    <source>
    </source>
</evidence>
<evidence type="ECO:0000305" key="7"/>
<reference key="1">
    <citation type="journal article" date="1999" name="FEBS Lett.">
        <title>The mitochondrial TIM22 preprotein translocase is highly conserved throughout the eukaryotic kingdom.</title>
        <authorList>
            <person name="Bauer M.F."/>
            <person name="Rothbauer U."/>
            <person name="Muehlenbein N."/>
            <person name="Smith R.J.H."/>
            <person name="Gerbitz K.-D."/>
            <person name="Neupert W."/>
            <person name="Brunner M."/>
            <person name="Hofmann S."/>
        </authorList>
    </citation>
    <scope>NUCLEOTIDE SEQUENCE [MRNA]</scope>
</reference>
<reference key="2">
    <citation type="journal article" date="2004" name="Nat. Genet.">
        <title>Complete sequencing and characterization of 21,243 full-length human cDNAs.</title>
        <authorList>
            <person name="Ota T."/>
            <person name="Suzuki Y."/>
            <person name="Nishikawa T."/>
            <person name="Otsuki T."/>
            <person name="Sugiyama T."/>
            <person name="Irie R."/>
            <person name="Wakamatsu A."/>
            <person name="Hayashi K."/>
            <person name="Sato H."/>
            <person name="Nagai K."/>
            <person name="Kimura K."/>
            <person name="Makita H."/>
            <person name="Sekine M."/>
            <person name="Obayashi M."/>
            <person name="Nishi T."/>
            <person name="Shibahara T."/>
            <person name="Tanaka T."/>
            <person name="Ishii S."/>
            <person name="Yamamoto J."/>
            <person name="Saito K."/>
            <person name="Kawai Y."/>
            <person name="Isono Y."/>
            <person name="Nakamura Y."/>
            <person name="Nagahari K."/>
            <person name="Murakami K."/>
            <person name="Yasuda T."/>
            <person name="Iwayanagi T."/>
            <person name="Wagatsuma M."/>
            <person name="Shiratori A."/>
            <person name="Sudo H."/>
            <person name="Hosoiri T."/>
            <person name="Kaku Y."/>
            <person name="Kodaira H."/>
            <person name="Kondo H."/>
            <person name="Sugawara M."/>
            <person name="Takahashi M."/>
            <person name="Kanda K."/>
            <person name="Yokoi T."/>
            <person name="Furuya T."/>
            <person name="Kikkawa E."/>
            <person name="Omura Y."/>
            <person name="Abe K."/>
            <person name="Kamihara K."/>
            <person name="Katsuta N."/>
            <person name="Sato K."/>
            <person name="Tanikawa M."/>
            <person name="Yamazaki M."/>
            <person name="Ninomiya K."/>
            <person name="Ishibashi T."/>
            <person name="Yamashita H."/>
            <person name="Murakawa K."/>
            <person name="Fujimori K."/>
            <person name="Tanai H."/>
            <person name="Kimata M."/>
            <person name="Watanabe M."/>
            <person name="Hiraoka S."/>
            <person name="Chiba Y."/>
            <person name="Ishida S."/>
            <person name="Ono Y."/>
            <person name="Takiguchi S."/>
            <person name="Watanabe S."/>
            <person name="Yosida M."/>
            <person name="Hotuta T."/>
            <person name="Kusano J."/>
            <person name="Kanehori K."/>
            <person name="Takahashi-Fujii A."/>
            <person name="Hara H."/>
            <person name="Tanase T.-O."/>
            <person name="Nomura Y."/>
            <person name="Togiya S."/>
            <person name="Komai F."/>
            <person name="Hara R."/>
            <person name="Takeuchi K."/>
            <person name="Arita M."/>
            <person name="Imose N."/>
            <person name="Musashino K."/>
            <person name="Yuuki H."/>
            <person name="Oshima A."/>
            <person name="Sasaki N."/>
            <person name="Aotsuka S."/>
            <person name="Yoshikawa Y."/>
            <person name="Matsunawa H."/>
            <person name="Ichihara T."/>
            <person name="Shiohata N."/>
            <person name="Sano S."/>
            <person name="Moriya S."/>
            <person name="Momiyama H."/>
            <person name="Satoh N."/>
            <person name="Takami S."/>
            <person name="Terashima Y."/>
            <person name="Suzuki O."/>
            <person name="Nakagawa S."/>
            <person name="Senoh A."/>
            <person name="Mizoguchi H."/>
            <person name="Goto Y."/>
            <person name="Shimizu F."/>
            <person name="Wakebe H."/>
            <person name="Hishigaki H."/>
            <person name="Watanabe T."/>
            <person name="Sugiyama A."/>
            <person name="Takemoto M."/>
            <person name="Kawakami B."/>
            <person name="Yamazaki M."/>
            <person name="Watanabe K."/>
            <person name="Kumagai A."/>
            <person name="Itakura S."/>
            <person name="Fukuzumi Y."/>
            <person name="Fujimori Y."/>
            <person name="Komiyama M."/>
            <person name="Tashiro H."/>
            <person name="Tanigami A."/>
            <person name="Fujiwara T."/>
            <person name="Ono T."/>
            <person name="Yamada K."/>
            <person name="Fujii Y."/>
            <person name="Ozaki K."/>
            <person name="Hirao M."/>
            <person name="Ohmori Y."/>
            <person name="Kawabata A."/>
            <person name="Hikiji T."/>
            <person name="Kobatake N."/>
            <person name="Inagaki H."/>
            <person name="Ikema Y."/>
            <person name="Okamoto S."/>
            <person name="Okitani R."/>
            <person name="Kawakami T."/>
            <person name="Noguchi S."/>
            <person name="Itoh T."/>
            <person name="Shigeta K."/>
            <person name="Senba T."/>
            <person name="Matsumura K."/>
            <person name="Nakajima Y."/>
            <person name="Mizuno T."/>
            <person name="Morinaga M."/>
            <person name="Sasaki M."/>
            <person name="Togashi T."/>
            <person name="Oyama M."/>
            <person name="Hata H."/>
            <person name="Watanabe M."/>
            <person name="Komatsu T."/>
            <person name="Mizushima-Sugano J."/>
            <person name="Satoh T."/>
            <person name="Shirai Y."/>
            <person name="Takahashi Y."/>
            <person name="Nakagawa K."/>
            <person name="Okumura K."/>
            <person name="Nagase T."/>
            <person name="Nomura N."/>
            <person name="Kikuchi H."/>
            <person name="Masuho Y."/>
            <person name="Yamashita R."/>
            <person name="Nakai K."/>
            <person name="Yada T."/>
            <person name="Nakamura Y."/>
            <person name="Ohara O."/>
            <person name="Isogai T."/>
            <person name="Sugano S."/>
        </authorList>
    </citation>
    <scope>NUCLEOTIDE SEQUENCE [LARGE SCALE MRNA]</scope>
    <source>
        <tissue>Adipose tissue</tissue>
    </source>
</reference>
<reference key="3">
    <citation type="journal article" date="2004" name="Genome Res.">
        <title>The status, quality, and expansion of the NIH full-length cDNA project: the Mammalian Gene Collection (MGC).</title>
        <authorList>
            <consortium name="The MGC Project Team"/>
        </authorList>
    </citation>
    <scope>NUCLEOTIDE SEQUENCE [LARGE SCALE MRNA]</scope>
    <source>
        <tissue>Lung</tissue>
    </source>
</reference>
<reference key="4">
    <citation type="journal article" date="2004" name="J. Biol. Chem.">
        <title>Organization and function of the small Tim complexes acting along the import pathway of metabolite carriers into mammalian mitochondria.</title>
        <authorList>
            <person name="Muehlenbein N."/>
            <person name="Hofmann S."/>
            <person name="Rothbauer U."/>
            <person name="Bauer M.F."/>
        </authorList>
    </citation>
    <scope>INTERACTION WITH TIMM9; TIMM10A AND TIMM10B</scope>
</reference>
<reference key="5">
    <citation type="thesis" date="2005" institute="University of Munich" country="Germany">
        <title>Characterisation of the mitochondrial human Tim22-translocase.</title>
        <authorList>
            <person name="Muehlenbein N."/>
        </authorList>
    </citation>
    <scope>CHARACTERIZATION</scope>
</reference>
<reference key="6">
    <citation type="journal article" date="2011" name="BMC Syst. Biol.">
        <title>Initial characterization of the human central proteome.</title>
        <authorList>
            <person name="Burkard T.R."/>
            <person name="Planyavsky M."/>
            <person name="Kaupe I."/>
            <person name="Breitwieser F.P."/>
            <person name="Buerckstuemmer T."/>
            <person name="Bennett K.L."/>
            <person name="Superti-Furga G."/>
            <person name="Colinge J."/>
        </authorList>
    </citation>
    <scope>IDENTIFICATION BY MASS SPECTROMETRY [LARGE SCALE ANALYSIS]</scope>
</reference>
<reference key="7">
    <citation type="journal article" date="2015" name="Proteomics">
        <title>N-terminome analysis of the human mitochondrial proteome.</title>
        <authorList>
            <person name="Vaca Jacome A.S."/>
            <person name="Rabilloud T."/>
            <person name="Schaeffer-Reiss C."/>
            <person name="Rompais M."/>
            <person name="Ayoub D."/>
            <person name="Lane L."/>
            <person name="Bairoch A."/>
            <person name="Van Dorsselaer A."/>
            <person name="Carapito C."/>
        </authorList>
    </citation>
    <scope>IDENTIFICATION BY MASS SPECTROMETRY [LARGE SCALE ANALYSIS]</scope>
</reference>
<reference key="8">
    <citation type="journal article" date="2016" name="FEBS Lett.">
        <title>TIM29 is a subunit of the human carrier translocase required for protein transport.</title>
        <authorList>
            <person name="Callegari S."/>
            <person name="Richter F."/>
            <person name="Chojnacka K."/>
            <person name="Jans D.C."/>
            <person name="Lorenzi I."/>
            <person name="Pacheu-Grau D."/>
            <person name="Jakobs S."/>
            <person name="Lenz C."/>
            <person name="Urlaub H."/>
            <person name="Dudek J."/>
            <person name="Chacinska A."/>
            <person name="Rehling P."/>
        </authorList>
    </citation>
    <scope>INTERACTION WITH TIMM29</scope>
    <scope>IDENTIFICATION IN THE TIM22 COMPLEX</scope>
</reference>
<reference key="9">
    <citation type="journal article" date="2016" name="Sci. Rep.">
        <title>The presence of disulfide bonds reveals an evolutionarily conserved mechanism involved in mitochondrial protein translocase assembly.</title>
        <authorList>
            <person name="Wrobel L."/>
            <person name="Sokol A.M."/>
            <person name="Chojnacka M."/>
            <person name="Chacinska A."/>
        </authorList>
    </citation>
    <scope>DISULFIDE BOND</scope>
    <scope>SUBCELLULAR LOCATION</scope>
    <scope>IDENTIFICATION IN THE TIM22 COMPLEX</scope>
</reference>
<reference key="10">
    <citation type="journal article" date="2017" name="Mol. Cell">
        <title>Acylglycerol kinase mutated in Sengers Syndrome is a subunit of the TIM22 protein translocase in mitochondria.</title>
        <authorList>
            <person name="Vukotic M."/>
            <person name="Nolte H."/>
            <person name="Koenig T."/>
            <person name="Saita S."/>
            <person name="Ananjew M."/>
            <person name="Krueger M."/>
            <person name="Tatsuta T."/>
            <person name="Langer T."/>
        </authorList>
    </citation>
    <scope>IDENTIFICATION IN THE TIM22 COMPLEX</scope>
</reference>
<reference key="11">
    <citation type="journal article" date="2017" name="Mol. Cell">
        <title>Sengers syndrome-associated mitochondrial acylglycerol kinase is a subunit of the human TIM22 protein import complex.</title>
        <authorList>
            <person name="Kang Y."/>
            <person name="Stroud D.A."/>
            <person name="Baker M.J."/>
            <person name="De Souza D.P."/>
            <person name="Frazier A.E."/>
            <person name="Liem M."/>
            <person name="Tull D."/>
            <person name="Mathivanan S."/>
            <person name="McConville M.J."/>
            <person name="Thorburn D.R."/>
            <person name="Ryan M.T."/>
            <person name="Stojanovski D."/>
        </authorList>
    </citation>
    <scope>IDENTIFICATION IN THE TIM22 COMPLEX</scope>
</reference>
<reference key="12">
    <citation type="journal article" date="2018" name="Hum. Mol. Genet.">
        <title>Mutations of the mitochondrial carrier translocase channel subunit TIM22 cause early-onset mitochondrial myopathy.</title>
        <authorList>
            <person name="Pacheu-Grau D."/>
            <person name="Callegari S."/>
            <person name="Emperador S."/>
            <person name="Thompson K."/>
            <person name="Aich A."/>
            <person name="Topol S.E."/>
            <person name="Spencer E.G."/>
            <person name="McFarland R."/>
            <person name="Ruiz-Pesini E."/>
            <person name="Torkamani A."/>
            <person name="Taylor R.W."/>
            <person name="Montoya J."/>
            <person name="Rehling P."/>
        </authorList>
    </citation>
    <scope>INVOLVEMENT IN COXPD43</scope>
    <scope>VARIANTS COXPD43 25-TYR--ARG-194 DEL AND LEU-33</scope>
    <scope>CHARACTERIZATION OF VARIANT COXPD43 LEU-33</scope>
</reference>
<feature type="chain" id="PRO_0000210298" description="Mitochondrial import inner membrane translocase subunit Tim22">
    <location>
        <begin position="1"/>
        <end position="194"/>
    </location>
</feature>
<feature type="transmembrane region" description="Helical" evidence="2">
    <location>
        <begin position="74"/>
        <end position="94"/>
    </location>
</feature>
<feature type="transmembrane region" description="Helical" evidence="2">
    <location>
        <begin position="123"/>
        <end position="143"/>
    </location>
</feature>
<feature type="transmembrane region" description="Helical" evidence="2">
    <location>
        <begin position="170"/>
        <end position="190"/>
    </location>
</feature>
<feature type="disulfide bond" evidence="4">
    <location>
        <begin position="69"/>
        <end position="141"/>
    </location>
</feature>
<feature type="disulfide bond" evidence="4">
    <location>
        <begin position="160"/>
        <end position="179"/>
    </location>
</feature>
<feature type="sequence variant" id="VAR_084014" description="In COXPD43." evidence="6">
    <location>
        <begin position="25"/>
        <end position="194"/>
    </location>
</feature>
<feature type="sequence variant" id="VAR_084015" description="In COXPD43; affects assembly or stability of the translocase." evidence="6">
    <original>V</original>
    <variation>L</variation>
    <location>
        <position position="33"/>
    </location>
</feature>
<feature type="sequence conflict" description="In Ref. 1; AAD40106." evidence="7" ref="1">
    <original>DM</original>
    <variation>EH</variation>
    <location>
        <begin position="117"/>
        <end position="118"/>
    </location>
</feature>
<feature type="sequence conflict" description="In Ref. 1; AAD40106." evidence="7" ref="1">
    <original>E</original>
    <variation>W</variation>
    <location>
        <position position="140"/>
    </location>
</feature>
<feature type="sequence conflict" description="In Ref. 1; AAD40106." evidence="7" ref="1">
    <original>W</original>
    <variation>L</variation>
    <location>
        <position position="152"/>
    </location>
</feature>
<feature type="sequence conflict" description="In Ref. 1; AAD40106." evidence="7" ref="1">
    <original>IG</original>
    <variation>YW</variation>
    <location>
        <begin position="166"/>
        <end position="167"/>
    </location>
</feature>
<feature type="sequence conflict" description="In Ref. 1; AAD40106." evidence="7" ref="1">
    <original>IG</original>
    <variation>LL</variation>
    <location>
        <begin position="177"/>
        <end position="178"/>
    </location>
</feature>
<name>TIM22_HUMAN</name>
<comment type="function">
    <text evidence="1">Essential core component of the TIM22 complex, a complex that mediates the import and insertion of multi-pass transmembrane proteins into the mitochondrial inner membrane. In the TIM22 complex, it constitutes the voltage-activated and signal-gated channel. Forms a twin-pore translocase that uses the membrane potential as external driving force in 2 voltage-dependent steps (By similarity).</text>
</comment>
<comment type="subunit">
    <text evidence="3 4 5">Component of the TIM22 complex, whose core is composed of TIMM22, associated with peripheral protein FXC1/TIMM10B and the 70 kDa heterohexamer (PubMed:14726512, PubMed:27265872). In most cases, the 70 kDa complex is composed of TIMM9 and TIMM10 (TIMM10A or TIMM10B) (PubMed:14726512). A small fraction of the 70 kDa complex is composed of TIMM8 (TIMM8A/DDP1 or TIMM8B/DDP2) and TIMM13 (PubMed:14726512). The TIM22 complex also contains AGK and TIMM29 (PubMed:27718247, PubMed:28712724, PubMed:28712726). Interacts directly with TIMM9, TIMM10A and FXC1/TIMM10B (PubMed:14726512). Interacts (when oxidized) with TIMM29; interaction is direct (PubMed:27718247).</text>
</comment>
<comment type="interaction">
    <interactant intactId="EBI-1200494">
        <id>Q9Y584</id>
    </interactant>
    <interactant intactId="EBI-3867333">
        <id>A8MQ03</id>
        <label>CYSRT1</label>
    </interactant>
    <organismsDiffer>false</organismsDiffer>
    <experiments>3</experiments>
</comment>
<comment type="interaction">
    <interactant intactId="EBI-1200494">
        <id>Q9Y584</id>
    </interactant>
    <interactant intactId="EBI-7545592">
        <id>Q9H6H4</id>
        <label>REEP4</label>
    </interactant>
    <organismsDiffer>false</organismsDiffer>
    <experiments>3</experiments>
</comment>
<comment type="interaction">
    <interactant intactId="EBI-1200494">
        <id>Q9Y584</id>
    </interactant>
    <interactant intactId="EBI-8638294">
        <id>Q9NUH8</id>
        <label>TMEM14B</label>
    </interactant>
    <organismsDiffer>false</organismsDiffer>
    <experiments>3</experiments>
</comment>
<comment type="subcellular location">
    <subcellularLocation>
        <location evidence="4">Mitochondrion inner membrane</location>
        <topology evidence="2">Multi-pass membrane protein</topology>
    </subcellularLocation>
</comment>
<comment type="PTM">
    <text evidence="4">Disulfide bonds promote efficient assembly of the TIM22 complex.</text>
</comment>
<comment type="disease" evidence="6">
    <disease id="DI-05811">
        <name>Combined oxidative phosphorylation deficiency 43</name>
        <acronym>COXPD43</acronym>
        <description>An autosomal recessive mitochondrial disorder characterized by onset at birth, intrauterine growth retardation, hypotonia, myopathy, feeding difficulties associated with gastroesophageal reflux, and persistently elevated serum lactate and creatine kinase. Brain imaging shows delayed myelination. Muscle biopsy shows decreased activities of mitochondrial respiratory chain complexes I, III, and IV.</description>
        <dbReference type="MIM" id="618851"/>
    </disease>
    <text>The disease is caused by variants affecting the gene represented in this entry.</text>
</comment>
<comment type="similarity">
    <text evidence="7">Belongs to the Tim17/Tim22/Tim23 family.</text>
</comment>
<keyword id="KW-0002">3D-structure</keyword>
<keyword id="KW-0225">Disease variant</keyword>
<keyword id="KW-1015">Disulfide bond</keyword>
<keyword id="KW-0472">Membrane</keyword>
<keyword id="KW-0496">Mitochondrion</keyword>
<keyword id="KW-0999">Mitochondrion inner membrane</keyword>
<keyword id="KW-1274">Primary mitochondrial disease</keyword>
<keyword id="KW-0653">Protein transport</keyword>
<keyword id="KW-1267">Proteomics identification</keyword>
<keyword id="KW-1185">Reference proteome</keyword>
<keyword id="KW-0811">Translocation</keyword>
<keyword id="KW-0812">Transmembrane</keyword>
<keyword id="KW-1133">Transmembrane helix</keyword>
<keyword id="KW-0813">Transport</keyword>
<proteinExistence type="evidence at protein level"/>
<accession>Q9Y584</accession>
<accession>Q9NWI8</accession>
<protein>
    <recommendedName>
        <fullName>Mitochondrial import inner membrane translocase subunit Tim22</fullName>
    </recommendedName>
    <alternativeName>
        <fullName>Testis-expressed protein 4</fullName>
    </alternativeName>
</protein>
<organism>
    <name type="scientific">Homo sapiens</name>
    <name type="common">Human</name>
    <dbReference type="NCBI Taxonomy" id="9606"/>
    <lineage>
        <taxon>Eukaryota</taxon>
        <taxon>Metazoa</taxon>
        <taxon>Chordata</taxon>
        <taxon>Craniata</taxon>
        <taxon>Vertebrata</taxon>
        <taxon>Euteleostomi</taxon>
        <taxon>Mammalia</taxon>
        <taxon>Eutheria</taxon>
        <taxon>Euarchontoglires</taxon>
        <taxon>Primates</taxon>
        <taxon>Haplorrhini</taxon>
        <taxon>Catarrhini</taxon>
        <taxon>Hominidae</taxon>
        <taxon>Homo</taxon>
    </lineage>
</organism>
<sequence>MAAAAPNAGGSAPETAGSAEAPLQYSLLLQYLVGDKRQPRLLEPGSLGGIPSPAKSEEQKMIEKAMESCAFKAALACVGGFVLGGAFGVFTAGIDTNVGFDPKDPYRTPTAKEVLKDMGQRGMSYAKNFAIVGAMFSCTECLIESYRGTSDWKNSVISGCITGGAIGFRAGLKAGAIGCGGFAAFSAAIDYYLR</sequence>